<dbReference type="EC" id="6.3.5.2" evidence="1"/>
<dbReference type="EMBL" id="CP000026">
    <property type="protein sequence ID" value="AAV76371.1"/>
    <property type="molecule type" value="Genomic_DNA"/>
</dbReference>
<dbReference type="RefSeq" id="WP_000138296.1">
    <property type="nucleotide sequence ID" value="NC_006511.1"/>
</dbReference>
<dbReference type="SMR" id="Q5PI52"/>
<dbReference type="MEROPS" id="C26.957"/>
<dbReference type="KEGG" id="spt:SPA0357"/>
<dbReference type="HOGENOM" id="CLU_014340_0_5_6"/>
<dbReference type="UniPathway" id="UPA00189">
    <property type="reaction ID" value="UER00296"/>
</dbReference>
<dbReference type="Proteomes" id="UP000008185">
    <property type="component" value="Chromosome"/>
</dbReference>
<dbReference type="GO" id="GO:0005829">
    <property type="term" value="C:cytosol"/>
    <property type="evidence" value="ECO:0007669"/>
    <property type="project" value="TreeGrafter"/>
</dbReference>
<dbReference type="GO" id="GO:0005524">
    <property type="term" value="F:ATP binding"/>
    <property type="evidence" value="ECO:0007669"/>
    <property type="project" value="UniProtKB-UniRule"/>
</dbReference>
<dbReference type="GO" id="GO:0003921">
    <property type="term" value="F:GMP synthase activity"/>
    <property type="evidence" value="ECO:0007669"/>
    <property type="project" value="InterPro"/>
</dbReference>
<dbReference type="CDD" id="cd01742">
    <property type="entry name" value="GATase1_GMP_Synthase"/>
    <property type="match status" value="1"/>
</dbReference>
<dbReference type="CDD" id="cd01997">
    <property type="entry name" value="GMP_synthase_C"/>
    <property type="match status" value="1"/>
</dbReference>
<dbReference type="FunFam" id="3.30.300.10:FF:000002">
    <property type="entry name" value="GMP synthase [glutamine-hydrolyzing]"/>
    <property type="match status" value="1"/>
</dbReference>
<dbReference type="FunFam" id="3.40.50.620:FF:000001">
    <property type="entry name" value="GMP synthase [glutamine-hydrolyzing]"/>
    <property type="match status" value="1"/>
</dbReference>
<dbReference type="FunFam" id="3.40.50.880:FF:000001">
    <property type="entry name" value="GMP synthase [glutamine-hydrolyzing]"/>
    <property type="match status" value="1"/>
</dbReference>
<dbReference type="Gene3D" id="3.30.300.10">
    <property type="match status" value="1"/>
</dbReference>
<dbReference type="Gene3D" id="3.40.50.880">
    <property type="match status" value="1"/>
</dbReference>
<dbReference type="Gene3D" id="3.40.50.620">
    <property type="entry name" value="HUPs"/>
    <property type="match status" value="1"/>
</dbReference>
<dbReference type="HAMAP" id="MF_00344">
    <property type="entry name" value="GMP_synthase"/>
    <property type="match status" value="1"/>
</dbReference>
<dbReference type="InterPro" id="IPR029062">
    <property type="entry name" value="Class_I_gatase-like"/>
</dbReference>
<dbReference type="InterPro" id="IPR017926">
    <property type="entry name" value="GATASE"/>
</dbReference>
<dbReference type="InterPro" id="IPR001674">
    <property type="entry name" value="GMP_synth_C"/>
</dbReference>
<dbReference type="InterPro" id="IPR004739">
    <property type="entry name" value="GMP_synth_GATase"/>
</dbReference>
<dbReference type="InterPro" id="IPR022955">
    <property type="entry name" value="GMP_synthase"/>
</dbReference>
<dbReference type="InterPro" id="IPR025777">
    <property type="entry name" value="GMPS_ATP_PPase_dom"/>
</dbReference>
<dbReference type="InterPro" id="IPR022310">
    <property type="entry name" value="NAD/GMP_synthase"/>
</dbReference>
<dbReference type="InterPro" id="IPR014729">
    <property type="entry name" value="Rossmann-like_a/b/a_fold"/>
</dbReference>
<dbReference type="NCBIfam" id="TIGR00884">
    <property type="entry name" value="guaA_Cterm"/>
    <property type="match status" value="1"/>
</dbReference>
<dbReference type="NCBIfam" id="TIGR00888">
    <property type="entry name" value="guaA_Nterm"/>
    <property type="match status" value="1"/>
</dbReference>
<dbReference type="NCBIfam" id="NF000848">
    <property type="entry name" value="PRK00074.1"/>
    <property type="match status" value="1"/>
</dbReference>
<dbReference type="PANTHER" id="PTHR11922:SF2">
    <property type="entry name" value="GMP SYNTHASE [GLUTAMINE-HYDROLYZING]"/>
    <property type="match status" value="1"/>
</dbReference>
<dbReference type="PANTHER" id="PTHR11922">
    <property type="entry name" value="GMP SYNTHASE-RELATED"/>
    <property type="match status" value="1"/>
</dbReference>
<dbReference type="Pfam" id="PF00117">
    <property type="entry name" value="GATase"/>
    <property type="match status" value="1"/>
</dbReference>
<dbReference type="Pfam" id="PF00958">
    <property type="entry name" value="GMP_synt_C"/>
    <property type="match status" value="1"/>
</dbReference>
<dbReference type="Pfam" id="PF02540">
    <property type="entry name" value="NAD_synthase"/>
    <property type="match status" value="1"/>
</dbReference>
<dbReference type="PRINTS" id="PR00097">
    <property type="entry name" value="ANTSNTHASEII"/>
</dbReference>
<dbReference type="PRINTS" id="PR00099">
    <property type="entry name" value="CPSGATASE"/>
</dbReference>
<dbReference type="PRINTS" id="PR00096">
    <property type="entry name" value="GATASE"/>
</dbReference>
<dbReference type="SUPFAM" id="SSF52402">
    <property type="entry name" value="Adenine nucleotide alpha hydrolases-like"/>
    <property type="match status" value="1"/>
</dbReference>
<dbReference type="SUPFAM" id="SSF52317">
    <property type="entry name" value="Class I glutamine amidotransferase-like"/>
    <property type="match status" value="1"/>
</dbReference>
<dbReference type="SUPFAM" id="SSF54810">
    <property type="entry name" value="GMP synthetase C-terminal dimerisation domain"/>
    <property type="match status" value="1"/>
</dbReference>
<dbReference type="PROSITE" id="PS51273">
    <property type="entry name" value="GATASE_TYPE_1"/>
    <property type="match status" value="1"/>
</dbReference>
<dbReference type="PROSITE" id="PS51553">
    <property type="entry name" value="GMPS_ATP_PPASE"/>
    <property type="match status" value="1"/>
</dbReference>
<evidence type="ECO:0000255" key="1">
    <source>
        <dbReference type="HAMAP-Rule" id="MF_00344"/>
    </source>
</evidence>
<proteinExistence type="inferred from homology"/>
<organism>
    <name type="scientific">Salmonella paratyphi A (strain ATCC 9150 / SARB42)</name>
    <dbReference type="NCBI Taxonomy" id="295319"/>
    <lineage>
        <taxon>Bacteria</taxon>
        <taxon>Pseudomonadati</taxon>
        <taxon>Pseudomonadota</taxon>
        <taxon>Gammaproteobacteria</taxon>
        <taxon>Enterobacterales</taxon>
        <taxon>Enterobacteriaceae</taxon>
        <taxon>Salmonella</taxon>
    </lineage>
</organism>
<protein>
    <recommendedName>
        <fullName evidence="1">GMP synthase [glutamine-hydrolyzing]</fullName>
        <ecNumber evidence="1">6.3.5.2</ecNumber>
    </recommendedName>
    <alternativeName>
        <fullName evidence="1">GMP synthetase</fullName>
    </alternativeName>
    <alternativeName>
        <fullName evidence="1">Glutamine amidotransferase</fullName>
    </alternativeName>
</protein>
<accession>Q5PI52</accession>
<comment type="function">
    <text evidence="1">Catalyzes the synthesis of GMP from XMP.</text>
</comment>
<comment type="catalytic activity">
    <reaction evidence="1">
        <text>XMP + L-glutamine + ATP + H2O = GMP + L-glutamate + AMP + diphosphate + 2 H(+)</text>
        <dbReference type="Rhea" id="RHEA:11680"/>
        <dbReference type="ChEBI" id="CHEBI:15377"/>
        <dbReference type="ChEBI" id="CHEBI:15378"/>
        <dbReference type="ChEBI" id="CHEBI:29985"/>
        <dbReference type="ChEBI" id="CHEBI:30616"/>
        <dbReference type="ChEBI" id="CHEBI:33019"/>
        <dbReference type="ChEBI" id="CHEBI:57464"/>
        <dbReference type="ChEBI" id="CHEBI:58115"/>
        <dbReference type="ChEBI" id="CHEBI:58359"/>
        <dbReference type="ChEBI" id="CHEBI:456215"/>
        <dbReference type="EC" id="6.3.5.2"/>
    </reaction>
</comment>
<comment type="pathway">
    <text evidence="1">Purine metabolism; GMP biosynthesis; GMP from XMP (L-Gln route): step 1/1.</text>
</comment>
<comment type="subunit">
    <text evidence="1">Homodimer.</text>
</comment>
<feature type="chain" id="PRO_0000229466" description="GMP synthase [glutamine-hydrolyzing]">
    <location>
        <begin position="1"/>
        <end position="525"/>
    </location>
</feature>
<feature type="domain" description="Glutamine amidotransferase type-1" evidence="1">
    <location>
        <begin position="9"/>
        <end position="207"/>
    </location>
</feature>
<feature type="domain" description="GMPS ATP-PPase" evidence="1">
    <location>
        <begin position="208"/>
        <end position="400"/>
    </location>
</feature>
<feature type="active site" description="Nucleophile" evidence="1">
    <location>
        <position position="86"/>
    </location>
</feature>
<feature type="active site" evidence="1">
    <location>
        <position position="181"/>
    </location>
</feature>
<feature type="active site" evidence="1">
    <location>
        <position position="183"/>
    </location>
</feature>
<feature type="binding site" evidence="1">
    <location>
        <begin position="235"/>
        <end position="241"/>
    </location>
    <ligand>
        <name>ATP</name>
        <dbReference type="ChEBI" id="CHEBI:30616"/>
    </ligand>
</feature>
<gene>
    <name evidence="1" type="primary">guaA</name>
    <name type="ordered locus">SPA0357</name>
</gene>
<name>GUAA_SALPA</name>
<reference key="1">
    <citation type="journal article" date="2004" name="Nat. Genet.">
        <title>Comparison of genome degradation in Paratyphi A and Typhi, human-restricted serovars of Salmonella enterica that cause typhoid.</title>
        <authorList>
            <person name="McClelland M."/>
            <person name="Sanderson K.E."/>
            <person name="Clifton S.W."/>
            <person name="Latreille P."/>
            <person name="Porwollik S."/>
            <person name="Sabo A."/>
            <person name="Meyer R."/>
            <person name="Bieri T."/>
            <person name="Ozersky P."/>
            <person name="McLellan M."/>
            <person name="Harkins C.R."/>
            <person name="Wang C."/>
            <person name="Nguyen C."/>
            <person name="Berghoff A."/>
            <person name="Elliott G."/>
            <person name="Kohlberg S."/>
            <person name="Strong C."/>
            <person name="Du F."/>
            <person name="Carter J."/>
            <person name="Kremizki C."/>
            <person name="Layman D."/>
            <person name="Leonard S."/>
            <person name="Sun H."/>
            <person name="Fulton L."/>
            <person name="Nash W."/>
            <person name="Miner T."/>
            <person name="Minx P."/>
            <person name="Delehaunty K."/>
            <person name="Fronick C."/>
            <person name="Magrini V."/>
            <person name="Nhan M."/>
            <person name="Warren W."/>
            <person name="Florea L."/>
            <person name="Spieth J."/>
            <person name="Wilson R.K."/>
        </authorList>
    </citation>
    <scope>NUCLEOTIDE SEQUENCE [LARGE SCALE GENOMIC DNA]</scope>
    <source>
        <strain>ATCC 9150 / SARB42</strain>
    </source>
</reference>
<keyword id="KW-0067">ATP-binding</keyword>
<keyword id="KW-0315">Glutamine amidotransferase</keyword>
<keyword id="KW-0332">GMP biosynthesis</keyword>
<keyword id="KW-0436">Ligase</keyword>
<keyword id="KW-0547">Nucleotide-binding</keyword>
<keyword id="KW-0658">Purine biosynthesis</keyword>
<sequence>MTENIHKHRILILDFGSQYTQLVARRVRELGVYCELWAWDVTEAQIRDFNPSGIILSGGPESTTEENSPRAPQYVFEAGVPVFGVCYGMQTMAMQLGGHVEGSNEREFGYAQVEVLTDSALVRGIEDSLTADGKPLLDVWMSHGDKVTAIPSDFVTVASTESCPFAIMANEEKRFYGVQFHPEVTHTRQGMRMLERFVRDICQCEALWTPAKIIDDAVARIREQVGDDKVILGLSGGVDSSVTAMLLHRAIGKNLTCVFVDNGLLRLNEAEQVMDMFGDHFGLNIVHVPAEERFLSALAGENDPEAKRKIIGRVFVEVFDEEALKLEDVKWLAQGTIYPDVIESAASATGKAHVIKSHHNVGGLPKEMKMGLVEPLKELFKDEVRKIGLELGLPYDMLYRHPFPGPGLGVRVLGEVKKEYCDLLRRADAIFIEELRKADLYDKVSQAFTVFLPVRSVGVMGDGRKYDWVVSLRAVETIDFMTAHWAHLPYDFLGRVSNRIINEVNGISRVVYDISGKPPATIEWE</sequence>